<evidence type="ECO:0000250" key="1"/>
<evidence type="ECO:0000250" key="2">
    <source>
        <dbReference type="UniProtKB" id="Q0NZX5"/>
    </source>
</evidence>
<evidence type="ECO:0000255" key="3"/>
<evidence type="ECO:0000255" key="4">
    <source>
        <dbReference type="PROSITE-ProRule" id="PRU00068"/>
    </source>
</evidence>
<evidence type="ECO:0000255" key="5">
    <source>
        <dbReference type="PROSITE-ProRule" id="PRU00276"/>
    </source>
</evidence>
<evidence type="ECO:0000269" key="6">
    <source>
    </source>
</evidence>
<evidence type="ECO:0000305" key="7"/>
<evidence type="ECO:0000305" key="8">
    <source>
    </source>
</evidence>
<feature type="signal peptide" evidence="3">
    <location>
        <begin position="1"/>
        <end position="20"/>
    </location>
</feature>
<feature type="propeptide" id="PRO_0000424453" evidence="6">
    <location>
        <begin position="21"/>
        <end position="184"/>
    </location>
</feature>
<feature type="chain" id="PRO_0000424454" description="Snake venom metalloproteinase brevilysin L6">
    <location>
        <begin position="185"/>
        <end position="387"/>
    </location>
</feature>
<feature type="propeptide" id="PRO_0000424455" evidence="1">
    <location>
        <begin position="388"/>
        <end position="403"/>
    </location>
</feature>
<feature type="chain" id="PRO_0000424456" description="Disintegrin" evidence="1">
    <location>
        <begin position="404"/>
        <end position="476"/>
    </location>
</feature>
<feature type="domain" description="Peptidase M12B" evidence="5">
    <location>
        <begin position="191"/>
        <end position="387"/>
    </location>
</feature>
<feature type="domain" description="Disintegrin" evidence="4">
    <location>
        <begin position="395"/>
        <end position="476"/>
    </location>
</feature>
<feature type="short sequence motif" description="Cell attachment site">
    <location>
        <begin position="454"/>
        <end position="456"/>
    </location>
</feature>
<feature type="active site" evidence="5">
    <location>
        <position position="328"/>
    </location>
</feature>
<feature type="binding site" evidence="1">
    <location>
        <position position="194"/>
    </location>
    <ligand>
        <name>Ca(2+)</name>
        <dbReference type="ChEBI" id="CHEBI:29108"/>
    </ligand>
</feature>
<feature type="binding site" evidence="1">
    <location>
        <position position="278"/>
    </location>
    <ligand>
        <name>Ca(2+)</name>
        <dbReference type="ChEBI" id="CHEBI:29108"/>
    </ligand>
</feature>
<feature type="binding site" evidence="5">
    <location>
        <position position="327"/>
    </location>
    <ligand>
        <name>Zn(2+)</name>
        <dbReference type="ChEBI" id="CHEBI:29105"/>
        <note>catalytic</note>
    </ligand>
</feature>
<feature type="binding site" evidence="5">
    <location>
        <position position="331"/>
    </location>
    <ligand>
        <name>Zn(2+)</name>
        <dbReference type="ChEBI" id="CHEBI:29105"/>
        <note>catalytic</note>
    </ligand>
</feature>
<feature type="binding site" evidence="5">
    <location>
        <position position="337"/>
    </location>
    <ligand>
        <name>Zn(2+)</name>
        <dbReference type="ChEBI" id="CHEBI:29105"/>
        <note>catalytic</note>
    </ligand>
</feature>
<feature type="binding site" evidence="1">
    <location>
        <position position="382"/>
    </location>
    <ligand>
        <name>Ca(2+)</name>
        <dbReference type="ChEBI" id="CHEBI:29108"/>
    </ligand>
</feature>
<feature type="binding site" evidence="1">
    <location>
        <position position="385"/>
    </location>
    <ligand>
        <name>Ca(2+)</name>
        <dbReference type="ChEBI" id="CHEBI:29108"/>
    </ligand>
</feature>
<feature type="modified residue" description="Pyrrolidone carboxylic acid" evidence="6">
    <location>
        <position position="185"/>
    </location>
</feature>
<feature type="disulfide bond" evidence="5">
    <location>
        <begin position="302"/>
        <end position="382"/>
    </location>
</feature>
<feature type="disulfide bond" evidence="5">
    <location>
        <begin position="342"/>
        <end position="366"/>
    </location>
</feature>
<feature type="disulfide bond" evidence="5">
    <location>
        <begin position="344"/>
        <end position="349"/>
    </location>
</feature>
<feature type="disulfide bond" evidence="2">
    <location>
        <begin position="409"/>
        <end position="424"/>
    </location>
</feature>
<feature type="disulfide bond" evidence="2">
    <location>
        <begin position="411"/>
        <end position="419"/>
    </location>
</feature>
<feature type="disulfide bond" evidence="2">
    <location>
        <begin position="418"/>
        <end position="441"/>
    </location>
</feature>
<feature type="disulfide bond" evidence="2">
    <location>
        <begin position="432"/>
        <end position="438"/>
    </location>
</feature>
<feature type="disulfide bond" evidence="2">
    <location>
        <begin position="437"/>
        <end position="462"/>
    </location>
</feature>
<feature type="disulfide bond" evidence="2 4">
    <location>
        <begin position="450"/>
        <end position="469"/>
    </location>
</feature>
<feature type="sequence conflict" description="In Ref. 2; AA sequence." evidence="7" ref="2">
    <original>S</original>
    <variation>V</variation>
    <location>
        <position position="231"/>
    </location>
</feature>
<feature type="sequence conflict" description="In Ref. 2; AA sequence." evidence="7" ref="2">
    <original>N</original>
    <variation>T</variation>
    <location>
        <position position="251"/>
    </location>
</feature>
<feature type="sequence conflict" description="In Ref. 2; AA sequence." evidence="7" ref="2">
    <original>E</original>
    <variation>N</variation>
    <location>
        <position position="287"/>
    </location>
</feature>
<feature type="sequence conflict" description="In Ref. 2; AA sequence." evidence="7" ref="2">
    <original>IGL</original>
    <variation>LGI</variation>
    <location>
        <begin position="293"/>
        <end position="295"/>
    </location>
</feature>
<feature type="sequence conflict" description="In Ref. 2; AA sequence." evidence="7" ref="2">
    <original>T</original>
    <variation>L</variation>
    <location>
        <position position="329"/>
    </location>
</feature>
<comment type="function">
    <molecule>Snake venom metalloproteinase brevilysin L6</molecule>
    <text evidence="6">Shows weak degradation of alpha-fibrinogen, but has no activity on beta- and gamma-chains. Digests luteinizing hormone-releasing hormone (LH-RH) and oxidized insulin at X-Leu, X-Phe, and X-Val bonds as well as X-His bond. Does not show fibrinogen-clotting activity. Does not show hemorrhagic activity.</text>
</comment>
<comment type="function">
    <molecule>Disintegrin</molecule>
    <text evidence="1">Inhibits ADP-induced platelet aggregation.</text>
</comment>
<comment type="cofactor">
    <cofactor evidence="1">
        <name>Zn(2+)</name>
        <dbReference type="ChEBI" id="CHEBI:29105"/>
    </cofactor>
    <text evidence="1">Binds 1 zinc ion per subunit.</text>
</comment>
<comment type="activity regulation">
    <text evidence="6">The metalloproteinase is inhibited by EDTA, o-phenanthroline, and cysteine. Glutathione does not inhibit the enzymatic activity.</text>
</comment>
<comment type="biophysicochemical properties">
    <phDependence>
        <text evidence="6">Optimum pH is about 9.</text>
    </phDependence>
</comment>
<comment type="subunit">
    <text evidence="1">Homodimer; disulfide-linked (disintegrin).</text>
</comment>
<comment type="subcellular location">
    <subcellularLocation>
        <location evidence="6">Secreted</location>
    </subcellularLocation>
</comment>
<comment type="tissue specificity">
    <text evidence="8">Expressed by the venom gland.</text>
</comment>
<comment type="miscellaneous">
    <text>The disintegrin belongs to the dimeric disintegrin subfamily.</text>
</comment>
<comment type="similarity">
    <text evidence="7">Belongs to the venom metalloproteinase (M12B) family. P-II subfamily. P-IId sub-subfamily.</text>
</comment>
<keyword id="KW-0903">Direct protein sequencing</keyword>
<keyword id="KW-1015">Disulfide bond</keyword>
<keyword id="KW-1206">Fibrinogenolytic toxin</keyword>
<keyword id="KW-1199">Hemostasis impairing toxin</keyword>
<keyword id="KW-0378">Hydrolase</keyword>
<keyword id="KW-0479">Metal-binding</keyword>
<keyword id="KW-0482">Metalloprotease</keyword>
<keyword id="KW-0645">Protease</keyword>
<keyword id="KW-0873">Pyrrolidone carboxylic acid</keyword>
<keyword id="KW-0964">Secreted</keyword>
<keyword id="KW-0732">Signal</keyword>
<keyword id="KW-0800">Toxin</keyword>
<proteinExistence type="evidence at protein level"/>
<accession>Q9YI19</accession>
<organism>
    <name type="scientific">Gloydius brevicauda</name>
    <name type="common">Korean slamosa snake</name>
    <name type="synonym">Agkistrodon halys brevicaudus</name>
    <dbReference type="NCBI Taxonomy" id="3148161"/>
    <lineage>
        <taxon>Eukaryota</taxon>
        <taxon>Metazoa</taxon>
        <taxon>Chordata</taxon>
        <taxon>Craniata</taxon>
        <taxon>Vertebrata</taxon>
        <taxon>Euteleostomi</taxon>
        <taxon>Lepidosauria</taxon>
        <taxon>Squamata</taxon>
        <taxon>Bifurcata</taxon>
        <taxon>Unidentata</taxon>
        <taxon>Episquamata</taxon>
        <taxon>Toxicofera</taxon>
        <taxon>Serpentes</taxon>
        <taxon>Colubroidea</taxon>
        <taxon>Viperidae</taxon>
        <taxon>Crotalinae</taxon>
        <taxon>Gloydius</taxon>
    </lineage>
</organism>
<name>VM2MC_GLOBR</name>
<dbReference type="EC" id="3.4.24.-"/>
<dbReference type="EMBL" id="AF051790">
    <property type="protein sequence ID" value="AAD02655.1"/>
    <property type="molecule type" value="mRNA"/>
</dbReference>
<dbReference type="PIR" id="A59421">
    <property type="entry name" value="A59421"/>
</dbReference>
<dbReference type="SMR" id="Q9YI19"/>
<dbReference type="MEROPS" id="M12.178"/>
<dbReference type="GO" id="GO:0005576">
    <property type="term" value="C:extracellular region"/>
    <property type="evidence" value="ECO:0007669"/>
    <property type="project" value="UniProtKB-SubCell"/>
</dbReference>
<dbReference type="GO" id="GO:0005886">
    <property type="term" value="C:plasma membrane"/>
    <property type="evidence" value="ECO:0007669"/>
    <property type="project" value="TreeGrafter"/>
</dbReference>
<dbReference type="GO" id="GO:0046872">
    <property type="term" value="F:metal ion binding"/>
    <property type="evidence" value="ECO:0007669"/>
    <property type="project" value="UniProtKB-KW"/>
</dbReference>
<dbReference type="GO" id="GO:0004222">
    <property type="term" value="F:metalloendopeptidase activity"/>
    <property type="evidence" value="ECO:0007669"/>
    <property type="project" value="InterPro"/>
</dbReference>
<dbReference type="GO" id="GO:0090729">
    <property type="term" value="F:toxin activity"/>
    <property type="evidence" value="ECO:0007669"/>
    <property type="project" value="UniProtKB-KW"/>
</dbReference>
<dbReference type="GO" id="GO:0006508">
    <property type="term" value="P:proteolysis"/>
    <property type="evidence" value="ECO:0007669"/>
    <property type="project" value="UniProtKB-KW"/>
</dbReference>
<dbReference type="CDD" id="cd04269">
    <property type="entry name" value="ZnMc_adamalysin_II_like"/>
    <property type="match status" value="1"/>
</dbReference>
<dbReference type="FunFam" id="3.40.390.10:FF:000002">
    <property type="entry name" value="Disintegrin and metalloproteinase domain-containing protein 22"/>
    <property type="match status" value="1"/>
</dbReference>
<dbReference type="FunFam" id="4.10.70.10:FF:000005">
    <property type="entry name" value="Zinc metalloproteinase/disintegrin"/>
    <property type="match status" value="1"/>
</dbReference>
<dbReference type="Gene3D" id="3.40.390.10">
    <property type="entry name" value="Collagenase (Catalytic Domain)"/>
    <property type="match status" value="1"/>
</dbReference>
<dbReference type="Gene3D" id="4.10.70.10">
    <property type="entry name" value="Disintegrin domain"/>
    <property type="match status" value="1"/>
</dbReference>
<dbReference type="InterPro" id="IPR018358">
    <property type="entry name" value="Disintegrin_CS"/>
</dbReference>
<dbReference type="InterPro" id="IPR001762">
    <property type="entry name" value="Disintegrin_dom"/>
</dbReference>
<dbReference type="InterPro" id="IPR036436">
    <property type="entry name" value="Disintegrin_dom_sf"/>
</dbReference>
<dbReference type="InterPro" id="IPR024079">
    <property type="entry name" value="MetalloPept_cat_dom_sf"/>
</dbReference>
<dbReference type="InterPro" id="IPR001590">
    <property type="entry name" value="Peptidase_M12B"/>
</dbReference>
<dbReference type="InterPro" id="IPR002870">
    <property type="entry name" value="Peptidase_M12B_N"/>
</dbReference>
<dbReference type="InterPro" id="IPR034027">
    <property type="entry name" value="Reprolysin_adamalysin"/>
</dbReference>
<dbReference type="PANTHER" id="PTHR11905">
    <property type="entry name" value="ADAM A DISINTEGRIN AND METALLOPROTEASE DOMAIN"/>
    <property type="match status" value="1"/>
</dbReference>
<dbReference type="PANTHER" id="PTHR11905:SF32">
    <property type="entry name" value="DISINTEGRIN AND METALLOPROTEINASE DOMAIN-CONTAINING PROTEIN 28"/>
    <property type="match status" value="1"/>
</dbReference>
<dbReference type="Pfam" id="PF00200">
    <property type="entry name" value="Disintegrin"/>
    <property type="match status" value="1"/>
</dbReference>
<dbReference type="Pfam" id="PF01562">
    <property type="entry name" value="Pep_M12B_propep"/>
    <property type="match status" value="1"/>
</dbReference>
<dbReference type="Pfam" id="PF01421">
    <property type="entry name" value="Reprolysin"/>
    <property type="match status" value="1"/>
</dbReference>
<dbReference type="PRINTS" id="PR00289">
    <property type="entry name" value="DISINTEGRIN"/>
</dbReference>
<dbReference type="SMART" id="SM00050">
    <property type="entry name" value="DISIN"/>
    <property type="match status" value="1"/>
</dbReference>
<dbReference type="SUPFAM" id="SSF57552">
    <property type="entry name" value="Blood coagulation inhibitor (disintegrin)"/>
    <property type="match status" value="1"/>
</dbReference>
<dbReference type="SUPFAM" id="SSF55486">
    <property type="entry name" value="Metalloproteases ('zincins'), catalytic domain"/>
    <property type="match status" value="1"/>
</dbReference>
<dbReference type="PROSITE" id="PS50215">
    <property type="entry name" value="ADAM_MEPRO"/>
    <property type="match status" value="1"/>
</dbReference>
<dbReference type="PROSITE" id="PS00427">
    <property type="entry name" value="DISINTEGRIN_1"/>
    <property type="match status" value="1"/>
</dbReference>
<dbReference type="PROSITE" id="PS50214">
    <property type="entry name" value="DISINTEGRIN_2"/>
    <property type="match status" value="1"/>
</dbReference>
<sequence length="476" mass="52802">MIQVLLVIICLADFPYQGTSIILESGNVNDYEVVYPRKVTALPKGAVQPKYEDAMQYEFKVNGEPVVLHLEKNKGLFSKGYSETHYSPDGRKITTNPPVEDHCYYHGRIQNDADSTASISACNGLKGHFKHQGEMYLIEPLKLSDSEAHAVYKYENVEKEDEAPKMCGVTQTNWKSDEPIKASQQQRFPQRYIELVVVADHGMFTKYDSNLDTIRTWVHELVNSINEFYRSLNIDVSLTELEIWSNQDLINVQSAAGDTLEAFGDWRETDLLNRISHDNAQLLTATELDGNTIGLAHVASMCDPKRSTGVVQDHSAINLLVAVTMAHETGHNLGMNHDGNQCHCGANSCVMGDVLSEGVSYEFSDCSENEYQTYLTDRNPQCILNEPLRTDTVSTPVSGNELLEAGKECDCGAPANPCCDAETCKLRPGQQCAEGLCCDQCRFMKEGTICQEAKGDWNDDTCNGISAGCPRNGFYG</sequence>
<reference key="1">
    <citation type="submission" date="1998-03" db="EMBL/GenBank/DDBJ databases">
        <authorList>
            <person name="Jeon O.H."/>
            <person name="Kim D.S."/>
        </authorList>
    </citation>
    <scope>NUCLEOTIDE SEQUENCE [MRNA]</scope>
    <source>
        <tissue>Venom gland</tissue>
    </source>
</reference>
<reference key="2">
    <citation type="journal article" date="1999" name="J. Biochem.">
        <title>Purification and amino acid sequence of brevilysin L6, a non-hemorrhagic metalloprotease from Agkistrodon halys brevicaudus venom.</title>
        <authorList>
            <person name="Terada S."/>
            <person name="Hori J."/>
            <person name="Fujimura S."/>
            <person name="Kimoto E."/>
        </authorList>
    </citation>
    <scope>PROTEIN SEQUENCE OF 185-387</scope>
    <scope>FUNCTION</scope>
    <scope>BIOPHYSICOCHEMICAL PROPERTIES</scope>
    <scope>ACTIVITY REGULATION</scope>
    <scope>PYROGLUTAMATE FORMATION AT GLN-185</scope>
    <scope>SUBCELLULAR LOCATION</scope>
    <source>
        <tissue>Venom</tissue>
    </source>
</reference>
<protein>
    <recommendedName>
        <fullName>Zinc metalloproteinase/disintegrin</fullName>
    </recommendedName>
    <component>
        <recommendedName>
            <fullName>Snake venom metalloproteinase brevilysin L6</fullName>
            <shortName>SVMP</shortName>
        </recommendedName>
        <alternativeName>
            <fullName>Snake venom metalloproteinase Mt-c</fullName>
            <ecNumber>3.4.24.-</ecNumber>
        </alternativeName>
    </component>
    <component>
        <recommendedName>
            <fullName>Disintegrin</fullName>
        </recommendedName>
    </component>
</protein>